<gene>
    <name type="primary">PCDHGA2</name>
</gene>
<protein>
    <recommendedName>
        <fullName>Protocadherin gamma-A2</fullName>
        <shortName>PCDH-gamma-A2</shortName>
    </recommendedName>
</protein>
<dbReference type="RefSeq" id="NP_001076037.1">
    <property type="nucleotide sequence ID" value="NM_001082568.4"/>
</dbReference>
<dbReference type="SMR" id="Q5DRB8"/>
<dbReference type="GlyCosmos" id="Q5DRB8">
    <property type="glycosylation" value="3 sites, No reported glycans"/>
</dbReference>
<dbReference type="GeneID" id="100034677"/>
<dbReference type="KEGG" id="ptr:100034677"/>
<dbReference type="CTD" id="56113"/>
<dbReference type="InParanoid" id="Q5DRB8"/>
<dbReference type="OrthoDB" id="16640at9604"/>
<dbReference type="Proteomes" id="UP000002277">
    <property type="component" value="Unplaced"/>
</dbReference>
<dbReference type="GO" id="GO:0005886">
    <property type="term" value="C:plasma membrane"/>
    <property type="evidence" value="ECO:0000318"/>
    <property type="project" value="GO_Central"/>
</dbReference>
<dbReference type="GO" id="GO:0005509">
    <property type="term" value="F:calcium ion binding"/>
    <property type="evidence" value="ECO:0007669"/>
    <property type="project" value="InterPro"/>
</dbReference>
<dbReference type="GO" id="GO:0007155">
    <property type="term" value="P:cell adhesion"/>
    <property type="evidence" value="ECO:0000318"/>
    <property type="project" value="GO_Central"/>
</dbReference>
<dbReference type="GO" id="GO:0007156">
    <property type="term" value="P:homophilic cell adhesion via plasma membrane adhesion molecules"/>
    <property type="evidence" value="ECO:0007669"/>
    <property type="project" value="InterPro"/>
</dbReference>
<dbReference type="GO" id="GO:0007399">
    <property type="term" value="P:nervous system development"/>
    <property type="evidence" value="ECO:0007669"/>
    <property type="project" value="UniProtKB-ARBA"/>
</dbReference>
<dbReference type="CDD" id="cd11304">
    <property type="entry name" value="Cadherin_repeat"/>
    <property type="match status" value="6"/>
</dbReference>
<dbReference type="FunFam" id="2.60.40.60:FF:000004">
    <property type="entry name" value="Protocadherin 1 gamma 2"/>
    <property type="match status" value="1"/>
</dbReference>
<dbReference type="FunFam" id="2.60.40.60:FF:000001">
    <property type="entry name" value="Protocadherin alpha 2"/>
    <property type="match status" value="1"/>
</dbReference>
<dbReference type="FunFam" id="2.60.40.60:FF:000002">
    <property type="entry name" value="Protocadherin alpha 2"/>
    <property type="match status" value="1"/>
</dbReference>
<dbReference type="FunFam" id="2.60.40.60:FF:000006">
    <property type="entry name" value="Protocadherin alpha 2"/>
    <property type="match status" value="1"/>
</dbReference>
<dbReference type="FunFam" id="2.60.40.60:FF:000129">
    <property type="entry name" value="protocadherin alpha-C2 isoform X1"/>
    <property type="match status" value="1"/>
</dbReference>
<dbReference type="FunFam" id="2.60.40.60:FF:000018">
    <property type="entry name" value="Protocadherin gamma c3"/>
    <property type="match status" value="1"/>
</dbReference>
<dbReference type="Gene3D" id="2.60.40.60">
    <property type="entry name" value="Cadherins"/>
    <property type="match status" value="6"/>
</dbReference>
<dbReference type="InterPro" id="IPR002126">
    <property type="entry name" value="Cadherin-like_dom"/>
</dbReference>
<dbReference type="InterPro" id="IPR015919">
    <property type="entry name" value="Cadherin-like_sf"/>
</dbReference>
<dbReference type="InterPro" id="IPR032455">
    <property type="entry name" value="Cadherin_C"/>
</dbReference>
<dbReference type="InterPro" id="IPR031904">
    <property type="entry name" value="Cadherin_CBD"/>
</dbReference>
<dbReference type="InterPro" id="IPR020894">
    <property type="entry name" value="Cadherin_CS"/>
</dbReference>
<dbReference type="InterPro" id="IPR013164">
    <property type="entry name" value="Cadherin_N"/>
</dbReference>
<dbReference type="InterPro" id="IPR050174">
    <property type="entry name" value="Protocadherin/Cadherin-CA"/>
</dbReference>
<dbReference type="PANTHER" id="PTHR24028">
    <property type="entry name" value="CADHERIN-87A"/>
    <property type="match status" value="1"/>
</dbReference>
<dbReference type="PANTHER" id="PTHR24028:SF134">
    <property type="entry name" value="PROTOCADHERIN GAMMA-A2"/>
    <property type="match status" value="1"/>
</dbReference>
<dbReference type="Pfam" id="PF00028">
    <property type="entry name" value="Cadherin"/>
    <property type="match status" value="5"/>
</dbReference>
<dbReference type="Pfam" id="PF08266">
    <property type="entry name" value="Cadherin_2"/>
    <property type="match status" value="1"/>
</dbReference>
<dbReference type="Pfam" id="PF16492">
    <property type="entry name" value="Cadherin_C_2"/>
    <property type="match status" value="1"/>
</dbReference>
<dbReference type="Pfam" id="PF15974">
    <property type="entry name" value="Cadherin_tail"/>
    <property type="match status" value="1"/>
</dbReference>
<dbReference type="PRINTS" id="PR00205">
    <property type="entry name" value="CADHERIN"/>
</dbReference>
<dbReference type="SMART" id="SM00112">
    <property type="entry name" value="CA"/>
    <property type="match status" value="6"/>
</dbReference>
<dbReference type="SUPFAM" id="SSF49313">
    <property type="entry name" value="Cadherin-like"/>
    <property type="match status" value="6"/>
</dbReference>
<dbReference type="PROSITE" id="PS00232">
    <property type="entry name" value="CADHERIN_1"/>
    <property type="match status" value="5"/>
</dbReference>
<dbReference type="PROSITE" id="PS50268">
    <property type="entry name" value="CADHERIN_2"/>
    <property type="match status" value="6"/>
</dbReference>
<organism>
    <name type="scientific">Pan troglodytes</name>
    <name type="common">Chimpanzee</name>
    <dbReference type="NCBI Taxonomy" id="9598"/>
    <lineage>
        <taxon>Eukaryota</taxon>
        <taxon>Metazoa</taxon>
        <taxon>Chordata</taxon>
        <taxon>Craniata</taxon>
        <taxon>Vertebrata</taxon>
        <taxon>Euteleostomi</taxon>
        <taxon>Mammalia</taxon>
        <taxon>Eutheria</taxon>
        <taxon>Euarchontoglires</taxon>
        <taxon>Primates</taxon>
        <taxon>Haplorrhini</taxon>
        <taxon>Catarrhini</taxon>
        <taxon>Hominidae</taxon>
        <taxon>Pan</taxon>
    </lineage>
</organism>
<sequence length="932" mass="101485">MAALQKLPHCRKLFLLCFLLATLWEARAGQIRYSVREEIDRGSFVGNIAKDLGLEPLALAEQGVRIVSRGRSQLFALNPRSGSLVTANRIDREELCAQSAPCLLNFNILLEDKLTIYSVEVEITDINDNAPRFGVEELELKISETTTPGFRIPLKNAHDADVGENALQKYALNPNDHFSLDVRSGADGNKYPELVLERALDREEEAVHHLVLVASDGGDPVLSGTSRICVKVLDANDNAPVFTQPEYRISIPENTPVGTRILTVTATDADEGYYAQVVYFLEKSPGETSEVFELKSTSGELTIIKDLDYEDATFHEIDIEAQDGPGLLTRAKVIVTVLDVNDNAPEFYMTSATSSVSEDSLPGTIIGLFNVHDRDSGQNAFTTCSLPENLPFKLEKSVDNYYRLVTTRALDREQFSFYNITLTAKDGGNPSLSTDAHILLQVADINDNAPAFSRTSYSTYIPENNPRGASVFSVTAHDPDSNDNAHVTYSFVEDTVQGAPLSSYISINSDTGVLYALRSFDYEQLRDLQVWVIARDSGNPPLSSNVSLSLFVLDQNDNPPEILYPAFPTDGSTGVELAPRSAEPGYLVTKVVAVDRDSGQNAWLSYHLLKASEPGLFSVGLHTGEVRTARALLDRDALKQSLVVAVQDHGQPPLSATVTLTVAVADRIPDILADLGSLEPSAKPNDSDLTLYLVVAVAAVSCVFLAFVIVLLAHRLRRWHKSRLLQASGGSLTGMQSSHFVGVDGVRAFLQTYSHEVSLTADSRKSHLIFPQPNYADTLISQESCEKKDFLSAPQSLLEEEREETFSQQAPPNTDWRFSQAQRPGTSGSQNGDDTGTWPNNQFDTEMLQAMILASASEAADGSSTLGGGAGTMGLSARYGPQFTLQHVPDYRQNVYIPGSNATLTNAAGKRDGKAPAGGNGNKKKSGKKEKK</sequence>
<proteinExistence type="inferred from homology"/>
<feature type="signal peptide" evidence="2">
    <location>
        <begin position="1"/>
        <end position="28"/>
    </location>
</feature>
<feature type="chain" id="PRO_0000003951" description="Protocadherin gamma-A2">
    <location>
        <begin position="29"/>
        <end position="932"/>
    </location>
</feature>
<feature type="topological domain" description="Extracellular" evidence="2">
    <location>
        <begin position="29"/>
        <end position="692"/>
    </location>
</feature>
<feature type="transmembrane region" description="Helical" evidence="2">
    <location>
        <begin position="693"/>
        <end position="713"/>
    </location>
</feature>
<feature type="topological domain" description="Cytoplasmic" evidence="2">
    <location>
        <begin position="714"/>
        <end position="932"/>
    </location>
</feature>
<feature type="domain" description="Cadherin 1" evidence="3">
    <location>
        <begin position="29"/>
        <end position="133"/>
    </location>
</feature>
<feature type="domain" description="Cadherin 2" evidence="3">
    <location>
        <begin position="134"/>
        <end position="242"/>
    </location>
</feature>
<feature type="domain" description="Cadherin 3" evidence="3">
    <location>
        <begin position="243"/>
        <end position="347"/>
    </location>
</feature>
<feature type="domain" description="Cadherin 4" evidence="3">
    <location>
        <begin position="348"/>
        <end position="452"/>
    </location>
</feature>
<feature type="domain" description="Cadherin 5" evidence="3">
    <location>
        <begin position="453"/>
        <end position="562"/>
    </location>
</feature>
<feature type="domain" description="Cadherin 6" evidence="3">
    <location>
        <begin position="570"/>
        <end position="682"/>
    </location>
</feature>
<feature type="region of interest" description="Disordered" evidence="4">
    <location>
        <begin position="798"/>
        <end position="841"/>
    </location>
</feature>
<feature type="region of interest" description="Disordered" evidence="4">
    <location>
        <begin position="902"/>
        <end position="932"/>
    </location>
</feature>
<feature type="compositionally biased region" description="Polar residues" evidence="4">
    <location>
        <begin position="806"/>
        <end position="841"/>
    </location>
</feature>
<feature type="compositionally biased region" description="Basic residues" evidence="4">
    <location>
        <begin position="922"/>
        <end position="932"/>
    </location>
</feature>
<feature type="glycosylation site" description="N-linked (GlcNAc...) asparagine" evidence="2">
    <location>
        <position position="419"/>
    </location>
</feature>
<feature type="glycosylation site" description="N-linked (GlcNAc...) asparagine" evidence="2">
    <location>
        <position position="545"/>
    </location>
</feature>
<feature type="glycosylation site" description="N-linked (GlcNAc...) asparagine" evidence="2">
    <location>
        <position position="685"/>
    </location>
</feature>
<accession>Q5DRB8</accession>
<name>PCDG2_PANTR</name>
<evidence type="ECO:0000250" key="1"/>
<evidence type="ECO:0000255" key="2"/>
<evidence type="ECO:0000255" key="3">
    <source>
        <dbReference type="PROSITE-ProRule" id="PRU00043"/>
    </source>
</evidence>
<evidence type="ECO:0000256" key="4">
    <source>
        <dbReference type="SAM" id="MobiDB-lite"/>
    </source>
</evidence>
<comment type="function">
    <text>Potential calcium-dependent cell-adhesion protein. May be involved in the establishment and maintenance of specific neuronal connections in the brain.</text>
</comment>
<comment type="subcellular location">
    <subcellularLocation>
        <location evidence="1">Cell membrane</location>
        <topology evidence="1">Single-pass type I membrane protein</topology>
    </subcellularLocation>
</comment>
<reference key="1">
    <citation type="journal article" date="2005" name="Nature">
        <title>Initial sequence of the chimpanzee genome and comparison with the human genome.</title>
        <authorList>
            <consortium name="Chimpanzee sequencing and analysis consortium"/>
        </authorList>
    </citation>
    <scope>NUCLEOTIDE SEQUENCE [LARGE SCALE GENOMIC DNA]</scope>
</reference>
<reference key="2">
    <citation type="journal article" date="2005" name="Genetics">
        <title>Comparative genomics and diversifying selection of the clustered vertebrate protocadherin genes.</title>
        <authorList>
            <person name="Wu Q."/>
        </authorList>
    </citation>
    <scope>IDENTIFICATION</scope>
</reference>
<keyword id="KW-0106">Calcium</keyword>
<keyword id="KW-0130">Cell adhesion</keyword>
<keyword id="KW-1003">Cell membrane</keyword>
<keyword id="KW-0325">Glycoprotein</keyword>
<keyword id="KW-0472">Membrane</keyword>
<keyword id="KW-1185">Reference proteome</keyword>
<keyword id="KW-0677">Repeat</keyword>
<keyword id="KW-0732">Signal</keyword>
<keyword id="KW-0812">Transmembrane</keyword>
<keyword id="KW-1133">Transmembrane helix</keyword>